<accession>Q9ZDW3</accession>
<keyword id="KW-0963">Cytoplasm</keyword>
<keyword id="KW-0255">Endonuclease</keyword>
<keyword id="KW-0378">Hydrolase</keyword>
<keyword id="KW-0464">Manganese</keyword>
<keyword id="KW-0479">Metal-binding</keyword>
<keyword id="KW-0540">Nuclease</keyword>
<keyword id="KW-1185">Reference proteome</keyword>
<protein>
    <recommendedName>
        <fullName>Ribonuclease HII</fullName>
        <shortName>RNase HII</shortName>
        <ecNumber>3.1.26.4</ecNumber>
    </recommendedName>
</protein>
<gene>
    <name type="primary">rnhB</name>
    <name type="ordered locus">RP202</name>
</gene>
<evidence type="ECO:0000250" key="1"/>
<evidence type="ECO:0000255" key="2">
    <source>
        <dbReference type="PROSITE-ProRule" id="PRU01319"/>
    </source>
</evidence>
<evidence type="ECO:0000305" key="3"/>
<sequence length="193" mass="21594">MEVNLLQYEKKYHNYIVAGVDEAGRGSLVGPVVASAVIIDKADIIPGIKDSKKLSKNKREILYERITSNYVWSTAIIAHTEIDNINILEATKKACAIAVANLSLKPQKILVDGNMKFSDIRFISIINGDNLSLSIAAASIIAKVTRDRLMLELSAEFPQYLWHKNYGYGTREHIEAIKTHGLSSYHRRSFKSC</sequence>
<organism>
    <name type="scientific">Rickettsia prowazekii (strain Madrid E)</name>
    <dbReference type="NCBI Taxonomy" id="272947"/>
    <lineage>
        <taxon>Bacteria</taxon>
        <taxon>Pseudomonadati</taxon>
        <taxon>Pseudomonadota</taxon>
        <taxon>Alphaproteobacteria</taxon>
        <taxon>Rickettsiales</taxon>
        <taxon>Rickettsiaceae</taxon>
        <taxon>Rickettsieae</taxon>
        <taxon>Rickettsia</taxon>
        <taxon>typhus group</taxon>
    </lineage>
</organism>
<reference key="1">
    <citation type="journal article" date="1998" name="Nature">
        <title>The genome sequence of Rickettsia prowazekii and the origin of mitochondria.</title>
        <authorList>
            <person name="Andersson S.G.E."/>
            <person name="Zomorodipour A."/>
            <person name="Andersson J.O."/>
            <person name="Sicheritz-Ponten T."/>
            <person name="Alsmark U.C.M."/>
            <person name="Podowski R.M."/>
            <person name="Naeslund A.K."/>
            <person name="Eriksson A.-S."/>
            <person name="Winkler H.H."/>
            <person name="Kurland C.G."/>
        </authorList>
    </citation>
    <scope>NUCLEOTIDE SEQUENCE [LARGE SCALE GENOMIC DNA]</scope>
    <source>
        <strain>Madrid E</strain>
    </source>
</reference>
<proteinExistence type="inferred from homology"/>
<dbReference type="EC" id="3.1.26.4"/>
<dbReference type="EMBL" id="AJ235270">
    <property type="protein sequence ID" value="CAA14667.1"/>
    <property type="molecule type" value="Genomic_DNA"/>
</dbReference>
<dbReference type="PIR" id="D71731">
    <property type="entry name" value="D71731"/>
</dbReference>
<dbReference type="RefSeq" id="NP_220590.1">
    <property type="nucleotide sequence ID" value="NC_000963.1"/>
</dbReference>
<dbReference type="RefSeq" id="WP_004595977.1">
    <property type="nucleotide sequence ID" value="NC_000963.1"/>
</dbReference>
<dbReference type="SMR" id="Q9ZDW3"/>
<dbReference type="STRING" id="272947.gene:17555283"/>
<dbReference type="EnsemblBacteria" id="CAA14667">
    <property type="protein sequence ID" value="CAA14667"/>
    <property type="gene ID" value="CAA14667"/>
</dbReference>
<dbReference type="KEGG" id="rpr:RP202"/>
<dbReference type="PATRIC" id="fig|272947.5.peg.211"/>
<dbReference type="eggNOG" id="COG0164">
    <property type="taxonomic scope" value="Bacteria"/>
</dbReference>
<dbReference type="HOGENOM" id="CLU_036532_3_1_5"/>
<dbReference type="OrthoDB" id="9803420at2"/>
<dbReference type="Proteomes" id="UP000002480">
    <property type="component" value="Chromosome"/>
</dbReference>
<dbReference type="GO" id="GO:0005737">
    <property type="term" value="C:cytoplasm"/>
    <property type="evidence" value="ECO:0007669"/>
    <property type="project" value="UniProtKB-SubCell"/>
</dbReference>
<dbReference type="GO" id="GO:0032299">
    <property type="term" value="C:ribonuclease H2 complex"/>
    <property type="evidence" value="ECO:0007669"/>
    <property type="project" value="TreeGrafter"/>
</dbReference>
<dbReference type="GO" id="GO:0030145">
    <property type="term" value="F:manganese ion binding"/>
    <property type="evidence" value="ECO:0007669"/>
    <property type="project" value="UniProtKB-UniRule"/>
</dbReference>
<dbReference type="GO" id="GO:0003723">
    <property type="term" value="F:RNA binding"/>
    <property type="evidence" value="ECO:0007669"/>
    <property type="project" value="InterPro"/>
</dbReference>
<dbReference type="GO" id="GO:0004523">
    <property type="term" value="F:RNA-DNA hybrid ribonuclease activity"/>
    <property type="evidence" value="ECO:0007669"/>
    <property type="project" value="UniProtKB-UniRule"/>
</dbReference>
<dbReference type="GO" id="GO:0043137">
    <property type="term" value="P:DNA replication, removal of RNA primer"/>
    <property type="evidence" value="ECO:0007669"/>
    <property type="project" value="TreeGrafter"/>
</dbReference>
<dbReference type="GO" id="GO:0006298">
    <property type="term" value="P:mismatch repair"/>
    <property type="evidence" value="ECO:0007669"/>
    <property type="project" value="TreeGrafter"/>
</dbReference>
<dbReference type="CDD" id="cd07182">
    <property type="entry name" value="RNase_HII_bacteria_HII_like"/>
    <property type="match status" value="1"/>
</dbReference>
<dbReference type="Gene3D" id="3.30.420.10">
    <property type="entry name" value="Ribonuclease H-like superfamily/Ribonuclease H"/>
    <property type="match status" value="1"/>
</dbReference>
<dbReference type="HAMAP" id="MF_00052_B">
    <property type="entry name" value="RNase_HII_B"/>
    <property type="match status" value="1"/>
</dbReference>
<dbReference type="InterPro" id="IPR022898">
    <property type="entry name" value="RNase_HII"/>
</dbReference>
<dbReference type="InterPro" id="IPR001352">
    <property type="entry name" value="RNase_HII/HIII"/>
</dbReference>
<dbReference type="InterPro" id="IPR024567">
    <property type="entry name" value="RNase_HII/HIII_dom"/>
</dbReference>
<dbReference type="InterPro" id="IPR012337">
    <property type="entry name" value="RNaseH-like_sf"/>
</dbReference>
<dbReference type="InterPro" id="IPR036397">
    <property type="entry name" value="RNaseH_sf"/>
</dbReference>
<dbReference type="NCBIfam" id="NF000595">
    <property type="entry name" value="PRK00015.1-3"/>
    <property type="match status" value="1"/>
</dbReference>
<dbReference type="PANTHER" id="PTHR10954">
    <property type="entry name" value="RIBONUCLEASE H2 SUBUNIT A"/>
    <property type="match status" value="1"/>
</dbReference>
<dbReference type="PANTHER" id="PTHR10954:SF18">
    <property type="entry name" value="RIBONUCLEASE HII"/>
    <property type="match status" value="1"/>
</dbReference>
<dbReference type="Pfam" id="PF01351">
    <property type="entry name" value="RNase_HII"/>
    <property type="match status" value="1"/>
</dbReference>
<dbReference type="SUPFAM" id="SSF53098">
    <property type="entry name" value="Ribonuclease H-like"/>
    <property type="match status" value="1"/>
</dbReference>
<dbReference type="PROSITE" id="PS51975">
    <property type="entry name" value="RNASE_H_2"/>
    <property type="match status" value="1"/>
</dbReference>
<comment type="function">
    <text evidence="1">Endonuclease that specifically degrades the RNA of RNA-DNA hybrids.</text>
</comment>
<comment type="catalytic activity">
    <reaction>
        <text>Endonucleolytic cleavage to 5'-phosphomonoester.</text>
        <dbReference type="EC" id="3.1.26.4"/>
    </reaction>
</comment>
<comment type="cofactor">
    <cofactor evidence="1">
        <name>Mn(2+)</name>
        <dbReference type="ChEBI" id="CHEBI:29035"/>
    </cofactor>
    <cofactor evidence="1">
        <name>Mg(2+)</name>
        <dbReference type="ChEBI" id="CHEBI:18420"/>
    </cofactor>
    <text evidence="1">Manganese or magnesium. Binds 1 divalent metal ion per monomer in the absence of substrate. May bind a second metal ion after substrate binding.</text>
</comment>
<comment type="subcellular location">
    <subcellularLocation>
        <location evidence="3">Cytoplasm</location>
    </subcellularLocation>
</comment>
<comment type="similarity">
    <text evidence="3">Belongs to the RNase HII family.</text>
</comment>
<feature type="chain" id="PRO_0000111613" description="Ribonuclease HII">
    <location>
        <begin position="1"/>
        <end position="193"/>
    </location>
</feature>
<feature type="domain" description="RNase H type-2" evidence="2">
    <location>
        <begin position="15"/>
        <end position="193"/>
    </location>
</feature>
<feature type="binding site" evidence="1">
    <location>
        <position position="21"/>
    </location>
    <ligand>
        <name>a divalent metal cation</name>
        <dbReference type="ChEBI" id="CHEBI:60240"/>
    </ligand>
</feature>
<feature type="binding site" evidence="1">
    <location>
        <position position="22"/>
    </location>
    <ligand>
        <name>a divalent metal cation</name>
        <dbReference type="ChEBI" id="CHEBI:60240"/>
    </ligand>
</feature>
<feature type="binding site" evidence="1">
    <location>
        <position position="112"/>
    </location>
    <ligand>
        <name>a divalent metal cation</name>
        <dbReference type="ChEBI" id="CHEBI:60240"/>
    </ligand>
</feature>
<name>RNH2_RICPR</name>